<accession>Q1MH44</accession>
<protein>
    <recommendedName>
        <fullName evidence="1">Acyl-[acyl-carrier-protein]--UDP-N-acetylglucosamine O-acyltransferase</fullName>
        <shortName evidence="1">UDP-N-acetylglucosamine acyltransferase</shortName>
        <ecNumber evidence="1">2.3.1.129</ecNumber>
    </recommendedName>
</protein>
<gene>
    <name evidence="1" type="primary">lpxA</name>
    <name type="ordered locus">RL2231</name>
</gene>
<proteinExistence type="inferred from homology"/>
<sequence length="272" mass="28514">MSTIAESARIHPMAVVEDGATIGEGVKIGPFCHVGPHVVLHANVELLSHAIVTGRTVIGKGTRIFPMAVVGGDPQSVHHGGEETTLTVGANCTIREGVTMNTGTADFGGQTIVGDNNLFLANSHVAHDCRVGNHVIMSNNVMLAGHVVIEDRVILGGGSAVHQFTRVGRQAFVGGLSAVSYDVIPYGMLNGNPGLLSGLNVVGMTRAGVDRAVIHRVRRAYKSIFEGPGSVRENAAAIREEYADCEQAVHILDFIAADSDRALSSPTRGQKG</sequence>
<evidence type="ECO:0000255" key="1">
    <source>
        <dbReference type="HAMAP-Rule" id="MF_00387"/>
    </source>
</evidence>
<dbReference type="EC" id="2.3.1.129" evidence="1"/>
<dbReference type="EMBL" id="AM236080">
    <property type="protein sequence ID" value="CAK07723.1"/>
    <property type="molecule type" value="Genomic_DNA"/>
</dbReference>
<dbReference type="RefSeq" id="WP_011651822.1">
    <property type="nucleotide sequence ID" value="NC_008380.1"/>
</dbReference>
<dbReference type="SMR" id="Q1MH44"/>
<dbReference type="EnsemblBacteria" id="CAK07723">
    <property type="protein sequence ID" value="CAK07723"/>
    <property type="gene ID" value="RL2231"/>
</dbReference>
<dbReference type="KEGG" id="rle:RL2231"/>
<dbReference type="eggNOG" id="COG1043">
    <property type="taxonomic scope" value="Bacteria"/>
</dbReference>
<dbReference type="HOGENOM" id="CLU_061249_0_0_5"/>
<dbReference type="UniPathway" id="UPA00359">
    <property type="reaction ID" value="UER00477"/>
</dbReference>
<dbReference type="Proteomes" id="UP000006575">
    <property type="component" value="Chromosome"/>
</dbReference>
<dbReference type="GO" id="GO:0005737">
    <property type="term" value="C:cytoplasm"/>
    <property type="evidence" value="ECO:0007669"/>
    <property type="project" value="UniProtKB-SubCell"/>
</dbReference>
<dbReference type="GO" id="GO:0016020">
    <property type="term" value="C:membrane"/>
    <property type="evidence" value="ECO:0007669"/>
    <property type="project" value="GOC"/>
</dbReference>
<dbReference type="GO" id="GO:0008780">
    <property type="term" value="F:acyl-[acyl-carrier-protein]-UDP-N-acetylglucosamine O-acyltransferase activity"/>
    <property type="evidence" value="ECO:0007669"/>
    <property type="project" value="UniProtKB-UniRule"/>
</dbReference>
<dbReference type="GO" id="GO:0009245">
    <property type="term" value="P:lipid A biosynthetic process"/>
    <property type="evidence" value="ECO:0007669"/>
    <property type="project" value="UniProtKB-UniRule"/>
</dbReference>
<dbReference type="CDD" id="cd03351">
    <property type="entry name" value="LbH_UDP-GlcNAc_AT"/>
    <property type="match status" value="1"/>
</dbReference>
<dbReference type="Gene3D" id="2.160.10.10">
    <property type="entry name" value="Hexapeptide repeat proteins"/>
    <property type="match status" value="1"/>
</dbReference>
<dbReference type="Gene3D" id="1.20.1180.10">
    <property type="entry name" value="Udp N-acetylglucosamine O-acyltransferase, C-terminal domain"/>
    <property type="match status" value="1"/>
</dbReference>
<dbReference type="HAMAP" id="MF_00387">
    <property type="entry name" value="LpxA"/>
    <property type="match status" value="1"/>
</dbReference>
<dbReference type="InterPro" id="IPR029098">
    <property type="entry name" value="Acetyltransf_C"/>
</dbReference>
<dbReference type="InterPro" id="IPR037157">
    <property type="entry name" value="Acetyltransf_C_sf"/>
</dbReference>
<dbReference type="InterPro" id="IPR001451">
    <property type="entry name" value="Hexapep"/>
</dbReference>
<dbReference type="InterPro" id="IPR010137">
    <property type="entry name" value="Lipid_A_LpxA"/>
</dbReference>
<dbReference type="InterPro" id="IPR011004">
    <property type="entry name" value="Trimer_LpxA-like_sf"/>
</dbReference>
<dbReference type="NCBIfam" id="TIGR01852">
    <property type="entry name" value="lipid_A_lpxA"/>
    <property type="match status" value="1"/>
</dbReference>
<dbReference type="NCBIfam" id="NF003657">
    <property type="entry name" value="PRK05289.1"/>
    <property type="match status" value="1"/>
</dbReference>
<dbReference type="PANTHER" id="PTHR43480">
    <property type="entry name" value="ACYL-[ACYL-CARRIER-PROTEIN]--UDP-N-ACETYLGLUCOSAMINE O-ACYLTRANSFERASE"/>
    <property type="match status" value="1"/>
</dbReference>
<dbReference type="PANTHER" id="PTHR43480:SF1">
    <property type="entry name" value="ACYL-[ACYL-CARRIER-PROTEIN]--UDP-N-ACETYLGLUCOSAMINE O-ACYLTRANSFERASE, MITOCHONDRIAL-RELATED"/>
    <property type="match status" value="1"/>
</dbReference>
<dbReference type="Pfam" id="PF13720">
    <property type="entry name" value="Acetyltransf_11"/>
    <property type="match status" value="1"/>
</dbReference>
<dbReference type="Pfam" id="PF00132">
    <property type="entry name" value="Hexapep"/>
    <property type="match status" value="2"/>
</dbReference>
<dbReference type="PIRSF" id="PIRSF000456">
    <property type="entry name" value="UDP-GlcNAc_acltr"/>
    <property type="match status" value="1"/>
</dbReference>
<dbReference type="SUPFAM" id="SSF51161">
    <property type="entry name" value="Trimeric LpxA-like enzymes"/>
    <property type="match status" value="1"/>
</dbReference>
<feature type="chain" id="PRO_1000013175" description="Acyl-[acyl-carrier-protein]--UDP-N-acetylglucosamine O-acyltransferase">
    <location>
        <begin position="1"/>
        <end position="272"/>
    </location>
</feature>
<keyword id="KW-0012">Acyltransferase</keyword>
<keyword id="KW-0963">Cytoplasm</keyword>
<keyword id="KW-0441">Lipid A biosynthesis</keyword>
<keyword id="KW-0444">Lipid biosynthesis</keyword>
<keyword id="KW-0443">Lipid metabolism</keyword>
<keyword id="KW-0677">Repeat</keyword>
<keyword id="KW-0808">Transferase</keyword>
<name>LPXA_RHIJ3</name>
<reference key="1">
    <citation type="journal article" date="2006" name="Genome Biol.">
        <title>The genome of Rhizobium leguminosarum has recognizable core and accessory components.</title>
        <authorList>
            <person name="Young J.P.W."/>
            <person name="Crossman L.C."/>
            <person name="Johnston A.W.B."/>
            <person name="Thomson N.R."/>
            <person name="Ghazoui Z.F."/>
            <person name="Hull K.H."/>
            <person name="Wexler M."/>
            <person name="Curson A.R.J."/>
            <person name="Todd J.D."/>
            <person name="Poole P.S."/>
            <person name="Mauchline T.H."/>
            <person name="East A.K."/>
            <person name="Quail M.A."/>
            <person name="Churcher C."/>
            <person name="Arrowsmith C."/>
            <person name="Cherevach I."/>
            <person name="Chillingworth T."/>
            <person name="Clarke K."/>
            <person name="Cronin A."/>
            <person name="Davis P."/>
            <person name="Fraser A."/>
            <person name="Hance Z."/>
            <person name="Hauser H."/>
            <person name="Jagels K."/>
            <person name="Moule S."/>
            <person name="Mungall K."/>
            <person name="Norbertczak H."/>
            <person name="Rabbinowitsch E."/>
            <person name="Sanders M."/>
            <person name="Simmonds M."/>
            <person name="Whitehead S."/>
            <person name="Parkhill J."/>
        </authorList>
    </citation>
    <scope>NUCLEOTIDE SEQUENCE [LARGE SCALE GENOMIC DNA]</scope>
    <source>
        <strain>DSM 114642 / LMG 32736 / 3841</strain>
    </source>
</reference>
<organism>
    <name type="scientific">Rhizobium johnstonii (strain DSM 114642 / LMG 32736 / 3841)</name>
    <name type="common">Rhizobium leguminosarum bv. viciae</name>
    <dbReference type="NCBI Taxonomy" id="216596"/>
    <lineage>
        <taxon>Bacteria</taxon>
        <taxon>Pseudomonadati</taxon>
        <taxon>Pseudomonadota</taxon>
        <taxon>Alphaproteobacteria</taxon>
        <taxon>Hyphomicrobiales</taxon>
        <taxon>Rhizobiaceae</taxon>
        <taxon>Rhizobium/Agrobacterium group</taxon>
        <taxon>Rhizobium</taxon>
        <taxon>Rhizobium johnstonii</taxon>
    </lineage>
</organism>
<comment type="function">
    <text evidence="1">Involved in the biosynthesis of lipid A, a phosphorylated glycolipid that anchors the lipopolysaccharide to the outer membrane of the cell.</text>
</comment>
<comment type="catalytic activity">
    <reaction evidence="1">
        <text>a (3R)-hydroxyacyl-[ACP] + UDP-N-acetyl-alpha-D-glucosamine = a UDP-3-O-[(3R)-3-hydroxyacyl]-N-acetyl-alpha-D-glucosamine + holo-[ACP]</text>
        <dbReference type="Rhea" id="RHEA:67812"/>
        <dbReference type="Rhea" id="RHEA-COMP:9685"/>
        <dbReference type="Rhea" id="RHEA-COMP:9945"/>
        <dbReference type="ChEBI" id="CHEBI:57705"/>
        <dbReference type="ChEBI" id="CHEBI:64479"/>
        <dbReference type="ChEBI" id="CHEBI:78827"/>
        <dbReference type="ChEBI" id="CHEBI:173225"/>
        <dbReference type="EC" id="2.3.1.129"/>
    </reaction>
</comment>
<comment type="pathway">
    <text evidence="1">Glycolipid biosynthesis; lipid IV(A) biosynthesis; lipid IV(A) from (3R)-3-hydroxytetradecanoyl-[acyl-carrier-protein] and UDP-N-acetyl-alpha-D-glucosamine: step 1/6.</text>
</comment>
<comment type="subunit">
    <text evidence="1">Homotrimer.</text>
</comment>
<comment type="subcellular location">
    <subcellularLocation>
        <location evidence="1">Cytoplasm</location>
    </subcellularLocation>
</comment>
<comment type="similarity">
    <text evidence="1">Belongs to the transferase hexapeptide repeat family. LpxA subfamily.</text>
</comment>